<sequence length="654" mass="73372">MAKERIVLPSAEFKKNSNITLKDYKSLYKESIENPNKFWAKEANRLTWFKKWTKVLNHDFKNAKVEWFKGGKLNVSYNCLDRHISTPLKNKAALIWEGDNPSESKVLTYYDVYREVNRFANVLKKYGVKKGDRVLVYLPMIPELAITILACTRIGAIHSVVFGGFSPEALQSRIDDCKPKLIVTADGGFRGGKPIELKRNVDIALEKSKEDVKTVIVVRRTGNESGLVWKDGRDYWYHFLIGDPDLSPYCKPESMDAEDPLFILYTSGSTGKPKGVLHTTGGYLLGVNLTFHYVFDIKPEDTYWCTADIGWVTGHSYLVYGPLSNGASSVMFEGVPSYPDAGRFWDVIDKYGVNIFYTAPTAIRALMREGLTHVQKRNLSSLRLLGSVGEPINPEAWEWYFKIIGKEKCPIVDTWWQTETGSIMITALPGAIPQKPGSATLPFFGVQPVLVDNDGKEINDKGEVSGNLCIKSPWPSMMRGVYGDSKRFFDTYFSQFKGYYFTGDGARRDKDGYYWITGRVDDVINVSGHRIGSAEVESALVENRSVAEAAVVGFPHDIKGQGIYAYVTVKEGIATNDTLKKELVAIVEKVIGKIARPDVIHWAPSLPKTRSGKIMRRILRKIASGEFEGLGDTSTLADPSVVQKLIEDKRKFHS</sequence>
<gene>
    <name evidence="1" type="primary">acsA</name>
    <name type="ordered locus">LBJ_2938</name>
</gene>
<proteinExistence type="inferred from homology"/>
<protein>
    <recommendedName>
        <fullName evidence="1">Acetyl-coenzyme A synthetase</fullName>
        <shortName evidence="1">AcCoA synthetase</shortName>
        <shortName evidence="1">Acs</shortName>
        <ecNumber evidence="1">6.2.1.1</ecNumber>
    </recommendedName>
    <alternativeName>
        <fullName evidence="1">Acetate--CoA ligase</fullName>
    </alternativeName>
    <alternativeName>
        <fullName evidence="1">Acyl-activating enzyme</fullName>
    </alternativeName>
</protein>
<evidence type="ECO:0000255" key="1">
    <source>
        <dbReference type="HAMAP-Rule" id="MF_01123"/>
    </source>
</evidence>
<organism>
    <name type="scientific">Leptospira borgpetersenii serovar Hardjo-bovis (strain JB197)</name>
    <dbReference type="NCBI Taxonomy" id="355277"/>
    <lineage>
        <taxon>Bacteria</taxon>
        <taxon>Pseudomonadati</taxon>
        <taxon>Spirochaetota</taxon>
        <taxon>Spirochaetia</taxon>
        <taxon>Leptospirales</taxon>
        <taxon>Leptospiraceae</taxon>
        <taxon>Leptospira</taxon>
    </lineage>
</organism>
<dbReference type="EC" id="6.2.1.1" evidence="1"/>
<dbReference type="EMBL" id="CP000350">
    <property type="protein sequence ID" value="ABJ77335.1"/>
    <property type="molecule type" value="Genomic_DNA"/>
</dbReference>
<dbReference type="SMR" id="Q04P35"/>
<dbReference type="KEGG" id="lbj:LBJ_2938"/>
<dbReference type="HOGENOM" id="CLU_000022_3_6_12"/>
<dbReference type="Proteomes" id="UP000000656">
    <property type="component" value="Chromosome 1"/>
</dbReference>
<dbReference type="GO" id="GO:0005829">
    <property type="term" value="C:cytosol"/>
    <property type="evidence" value="ECO:0007669"/>
    <property type="project" value="TreeGrafter"/>
</dbReference>
<dbReference type="GO" id="GO:0003987">
    <property type="term" value="F:acetate-CoA ligase activity"/>
    <property type="evidence" value="ECO:0007669"/>
    <property type="project" value="UniProtKB-UniRule"/>
</dbReference>
<dbReference type="GO" id="GO:0016208">
    <property type="term" value="F:AMP binding"/>
    <property type="evidence" value="ECO:0007669"/>
    <property type="project" value="InterPro"/>
</dbReference>
<dbReference type="GO" id="GO:0005524">
    <property type="term" value="F:ATP binding"/>
    <property type="evidence" value="ECO:0007669"/>
    <property type="project" value="UniProtKB-KW"/>
</dbReference>
<dbReference type="GO" id="GO:0046872">
    <property type="term" value="F:metal ion binding"/>
    <property type="evidence" value="ECO:0007669"/>
    <property type="project" value="UniProtKB-KW"/>
</dbReference>
<dbReference type="GO" id="GO:0019427">
    <property type="term" value="P:acetyl-CoA biosynthetic process from acetate"/>
    <property type="evidence" value="ECO:0007669"/>
    <property type="project" value="InterPro"/>
</dbReference>
<dbReference type="CDD" id="cd05966">
    <property type="entry name" value="ACS"/>
    <property type="match status" value="1"/>
</dbReference>
<dbReference type="FunFam" id="3.30.300.30:FF:000004">
    <property type="entry name" value="Acetyl-coenzyme A synthetase"/>
    <property type="match status" value="1"/>
</dbReference>
<dbReference type="FunFam" id="3.40.50.12780:FF:000001">
    <property type="entry name" value="Acetyl-coenzyme A synthetase"/>
    <property type="match status" value="1"/>
</dbReference>
<dbReference type="Gene3D" id="3.30.300.30">
    <property type="match status" value="1"/>
</dbReference>
<dbReference type="Gene3D" id="3.40.50.12780">
    <property type="entry name" value="N-terminal domain of ligase-like"/>
    <property type="match status" value="1"/>
</dbReference>
<dbReference type="HAMAP" id="MF_01123">
    <property type="entry name" value="Ac_CoA_synth"/>
    <property type="match status" value="1"/>
</dbReference>
<dbReference type="InterPro" id="IPR011904">
    <property type="entry name" value="Ac_CoA_lig"/>
</dbReference>
<dbReference type="InterPro" id="IPR032387">
    <property type="entry name" value="ACAS_N"/>
</dbReference>
<dbReference type="InterPro" id="IPR025110">
    <property type="entry name" value="AMP-bd_C"/>
</dbReference>
<dbReference type="InterPro" id="IPR045851">
    <property type="entry name" value="AMP-bd_C_sf"/>
</dbReference>
<dbReference type="InterPro" id="IPR020845">
    <property type="entry name" value="AMP-binding_CS"/>
</dbReference>
<dbReference type="InterPro" id="IPR000873">
    <property type="entry name" value="AMP-dep_synth/lig_dom"/>
</dbReference>
<dbReference type="InterPro" id="IPR042099">
    <property type="entry name" value="ANL_N_sf"/>
</dbReference>
<dbReference type="NCBIfam" id="TIGR02188">
    <property type="entry name" value="Ac_CoA_lig_AcsA"/>
    <property type="match status" value="1"/>
</dbReference>
<dbReference type="NCBIfam" id="NF001208">
    <property type="entry name" value="PRK00174.1"/>
    <property type="match status" value="1"/>
</dbReference>
<dbReference type="PANTHER" id="PTHR24095">
    <property type="entry name" value="ACETYL-COENZYME A SYNTHETASE"/>
    <property type="match status" value="1"/>
</dbReference>
<dbReference type="PANTHER" id="PTHR24095:SF14">
    <property type="entry name" value="ACETYL-COENZYME A SYNTHETASE 1"/>
    <property type="match status" value="1"/>
</dbReference>
<dbReference type="Pfam" id="PF16177">
    <property type="entry name" value="ACAS_N"/>
    <property type="match status" value="1"/>
</dbReference>
<dbReference type="Pfam" id="PF00501">
    <property type="entry name" value="AMP-binding"/>
    <property type="match status" value="1"/>
</dbReference>
<dbReference type="Pfam" id="PF13193">
    <property type="entry name" value="AMP-binding_C"/>
    <property type="match status" value="1"/>
</dbReference>
<dbReference type="SUPFAM" id="SSF56801">
    <property type="entry name" value="Acetyl-CoA synthetase-like"/>
    <property type="match status" value="1"/>
</dbReference>
<dbReference type="PROSITE" id="PS00455">
    <property type="entry name" value="AMP_BINDING"/>
    <property type="match status" value="1"/>
</dbReference>
<keyword id="KW-0007">Acetylation</keyword>
<keyword id="KW-0067">ATP-binding</keyword>
<keyword id="KW-0436">Ligase</keyword>
<keyword id="KW-0460">Magnesium</keyword>
<keyword id="KW-0479">Metal-binding</keyword>
<keyword id="KW-0547">Nucleotide-binding</keyword>
<comment type="function">
    <text evidence="1">Catalyzes the conversion of acetate into acetyl-CoA (AcCoA), an essential intermediate at the junction of anabolic and catabolic pathways. AcsA undergoes a two-step reaction. In the first half reaction, AcsA combines acetate with ATP to form acetyl-adenylate (AcAMP) intermediate. In the second half reaction, it can then transfer the acetyl group from AcAMP to the sulfhydryl group of CoA, forming the product AcCoA.</text>
</comment>
<comment type="catalytic activity">
    <reaction evidence="1">
        <text>acetate + ATP + CoA = acetyl-CoA + AMP + diphosphate</text>
        <dbReference type="Rhea" id="RHEA:23176"/>
        <dbReference type="ChEBI" id="CHEBI:30089"/>
        <dbReference type="ChEBI" id="CHEBI:30616"/>
        <dbReference type="ChEBI" id="CHEBI:33019"/>
        <dbReference type="ChEBI" id="CHEBI:57287"/>
        <dbReference type="ChEBI" id="CHEBI:57288"/>
        <dbReference type="ChEBI" id="CHEBI:456215"/>
        <dbReference type="EC" id="6.2.1.1"/>
    </reaction>
</comment>
<comment type="cofactor">
    <cofactor evidence="1">
        <name>Mg(2+)</name>
        <dbReference type="ChEBI" id="CHEBI:18420"/>
    </cofactor>
</comment>
<comment type="PTM">
    <text evidence="1">Acetylated. Deacetylation by the SIR2-homolog deacetylase activates the enzyme.</text>
</comment>
<comment type="similarity">
    <text evidence="1">Belongs to the ATP-dependent AMP-binding enzyme family.</text>
</comment>
<name>ACSA_LEPBJ</name>
<accession>Q04P35</accession>
<reference key="1">
    <citation type="journal article" date="2006" name="Proc. Natl. Acad. Sci. U.S.A.">
        <title>Genome reduction in Leptospira borgpetersenii reflects limited transmission potential.</title>
        <authorList>
            <person name="Bulach D.M."/>
            <person name="Zuerner R.L."/>
            <person name="Wilson P."/>
            <person name="Seemann T."/>
            <person name="McGrath A."/>
            <person name="Cullen P.A."/>
            <person name="Davis J."/>
            <person name="Johnson M."/>
            <person name="Kuczek E."/>
            <person name="Alt D.P."/>
            <person name="Peterson-Burch B."/>
            <person name="Coppel R.L."/>
            <person name="Rood J.I."/>
            <person name="Davies J.K."/>
            <person name="Adler B."/>
        </authorList>
    </citation>
    <scope>NUCLEOTIDE SEQUENCE [LARGE SCALE GENOMIC DNA]</scope>
    <source>
        <strain>JB197</strain>
    </source>
</reference>
<feature type="chain" id="PRO_1000085001" description="Acetyl-coenzyme A synthetase">
    <location>
        <begin position="1"/>
        <end position="654"/>
    </location>
</feature>
<feature type="binding site" evidence="1">
    <location>
        <begin position="190"/>
        <end position="193"/>
    </location>
    <ligand>
        <name>CoA</name>
        <dbReference type="ChEBI" id="CHEBI:57287"/>
    </ligand>
</feature>
<feature type="binding site" evidence="1">
    <location>
        <position position="313"/>
    </location>
    <ligand>
        <name>CoA</name>
        <dbReference type="ChEBI" id="CHEBI:57287"/>
    </ligand>
</feature>
<feature type="binding site" evidence="1">
    <location>
        <begin position="389"/>
        <end position="391"/>
    </location>
    <ligand>
        <name>ATP</name>
        <dbReference type="ChEBI" id="CHEBI:30616"/>
    </ligand>
</feature>
<feature type="binding site" evidence="1">
    <location>
        <begin position="413"/>
        <end position="418"/>
    </location>
    <ligand>
        <name>ATP</name>
        <dbReference type="ChEBI" id="CHEBI:30616"/>
    </ligand>
</feature>
<feature type="binding site" evidence="1">
    <location>
        <position position="504"/>
    </location>
    <ligand>
        <name>ATP</name>
        <dbReference type="ChEBI" id="CHEBI:30616"/>
    </ligand>
</feature>
<feature type="binding site" evidence="1">
    <location>
        <position position="519"/>
    </location>
    <ligand>
        <name>ATP</name>
        <dbReference type="ChEBI" id="CHEBI:30616"/>
    </ligand>
</feature>
<feature type="binding site" evidence="1">
    <location>
        <position position="527"/>
    </location>
    <ligand>
        <name>CoA</name>
        <dbReference type="ChEBI" id="CHEBI:57287"/>
    </ligand>
</feature>
<feature type="binding site" evidence="1">
    <location>
        <position position="530"/>
    </location>
    <ligand>
        <name>ATP</name>
        <dbReference type="ChEBI" id="CHEBI:30616"/>
    </ligand>
</feature>
<feature type="binding site" evidence="1">
    <location>
        <position position="541"/>
    </location>
    <ligand>
        <name>Mg(2+)</name>
        <dbReference type="ChEBI" id="CHEBI:18420"/>
    </ligand>
</feature>
<feature type="binding site" evidence="1">
    <location>
        <position position="546"/>
    </location>
    <ligand>
        <name>Mg(2+)</name>
        <dbReference type="ChEBI" id="CHEBI:18420"/>
    </ligand>
</feature>
<feature type="modified residue" description="N6-acetyllysine" evidence="1">
    <location>
        <position position="613"/>
    </location>
</feature>